<sequence>MLDVKSQDISIPEAVVVLCTAPDEATAQDLAAKVLAEKLAACATLLPGATSLYYWEGKLEQEYEVQMILKTTVSHQQALIDCLKSHHPYQTPELLVLPVTHGDTDYLSWLNASLR</sequence>
<organism>
    <name type="scientific">Salmonella enteritidis PT4 (strain P125109)</name>
    <dbReference type="NCBI Taxonomy" id="550537"/>
    <lineage>
        <taxon>Bacteria</taxon>
        <taxon>Pseudomonadati</taxon>
        <taxon>Pseudomonadota</taxon>
        <taxon>Gammaproteobacteria</taxon>
        <taxon>Enterobacterales</taxon>
        <taxon>Enterobacteriaceae</taxon>
        <taxon>Salmonella</taxon>
    </lineage>
</organism>
<proteinExistence type="inferred from homology"/>
<evidence type="ECO:0000255" key="1">
    <source>
        <dbReference type="HAMAP-Rule" id="MF_01160"/>
    </source>
</evidence>
<dbReference type="EMBL" id="AM933172">
    <property type="protein sequence ID" value="CAR35654.1"/>
    <property type="molecule type" value="Genomic_DNA"/>
</dbReference>
<dbReference type="RefSeq" id="WP_000887832.1">
    <property type="nucleotide sequence ID" value="NC_011294.1"/>
</dbReference>
<dbReference type="SMR" id="B5QZZ9"/>
<dbReference type="GeneID" id="66758552"/>
<dbReference type="KEGG" id="set:SEN4094"/>
<dbReference type="HOGENOM" id="CLU_098807_3_0_6"/>
<dbReference type="Proteomes" id="UP000000613">
    <property type="component" value="Chromosome"/>
</dbReference>
<dbReference type="GO" id="GO:0005737">
    <property type="term" value="C:cytoplasm"/>
    <property type="evidence" value="ECO:0007669"/>
    <property type="project" value="UniProtKB-SubCell"/>
</dbReference>
<dbReference type="GO" id="GO:0005507">
    <property type="term" value="F:copper ion binding"/>
    <property type="evidence" value="ECO:0007669"/>
    <property type="project" value="UniProtKB-UniRule"/>
</dbReference>
<dbReference type="GO" id="GO:0010038">
    <property type="term" value="P:response to metal ion"/>
    <property type="evidence" value="ECO:0007669"/>
    <property type="project" value="InterPro"/>
</dbReference>
<dbReference type="FunFam" id="3.30.70.120:FF:000004">
    <property type="entry name" value="Divalent-cation tolerance protein CutA"/>
    <property type="match status" value="1"/>
</dbReference>
<dbReference type="Gene3D" id="3.30.70.120">
    <property type="match status" value="1"/>
</dbReference>
<dbReference type="HAMAP" id="MF_01160">
    <property type="entry name" value="CutA"/>
    <property type="match status" value="1"/>
</dbReference>
<dbReference type="InterPro" id="IPR023700">
    <property type="entry name" value="CutA_Enterobact"/>
</dbReference>
<dbReference type="InterPro" id="IPR004323">
    <property type="entry name" value="Ion_tolerance_CutA"/>
</dbReference>
<dbReference type="InterPro" id="IPR011322">
    <property type="entry name" value="N-reg_PII-like_a/b"/>
</dbReference>
<dbReference type="InterPro" id="IPR015867">
    <property type="entry name" value="N-reg_PII/ATP_PRibTrfase_C"/>
</dbReference>
<dbReference type="NCBIfam" id="NF007930">
    <property type="entry name" value="PRK10645.1"/>
    <property type="match status" value="1"/>
</dbReference>
<dbReference type="PANTHER" id="PTHR23419">
    <property type="entry name" value="DIVALENT CATION TOLERANCE CUTA-RELATED"/>
    <property type="match status" value="1"/>
</dbReference>
<dbReference type="PANTHER" id="PTHR23419:SF8">
    <property type="entry name" value="FI09726P"/>
    <property type="match status" value="1"/>
</dbReference>
<dbReference type="Pfam" id="PF03091">
    <property type="entry name" value="CutA1"/>
    <property type="match status" value="1"/>
</dbReference>
<dbReference type="SUPFAM" id="SSF54913">
    <property type="entry name" value="GlnB-like"/>
    <property type="match status" value="1"/>
</dbReference>
<reference key="1">
    <citation type="journal article" date="2008" name="Genome Res.">
        <title>Comparative genome analysis of Salmonella enteritidis PT4 and Salmonella gallinarum 287/91 provides insights into evolutionary and host adaptation pathways.</title>
        <authorList>
            <person name="Thomson N.R."/>
            <person name="Clayton D.J."/>
            <person name="Windhorst D."/>
            <person name="Vernikos G."/>
            <person name="Davidson S."/>
            <person name="Churcher C."/>
            <person name="Quail M.A."/>
            <person name="Stevens M."/>
            <person name="Jones M.A."/>
            <person name="Watson M."/>
            <person name="Barron A."/>
            <person name="Layton A."/>
            <person name="Pickard D."/>
            <person name="Kingsley R.A."/>
            <person name="Bignell A."/>
            <person name="Clark L."/>
            <person name="Harris B."/>
            <person name="Ormond D."/>
            <person name="Abdellah Z."/>
            <person name="Brooks K."/>
            <person name="Cherevach I."/>
            <person name="Chillingworth T."/>
            <person name="Woodward J."/>
            <person name="Norberczak H."/>
            <person name="Lord A."/>
            <person name="Arrowsmith C."/>
            <person name="Jagels K."/>
            <person name="Moule S."/>
            <person name="Mungall K."/>
            <person name="Saunders M."/>
            <person name="Whitehead S."/>
            <person name="Chabalgoity J.A."/>
            <person name="Maskell D."/>
            <person name="Humphreys T."/>
            <person name="Roberts M."/>
            <person name="Barrow P.A."/>
            <person name="Dougan G."/>
            <person name="Parkhill J."/>
        </authorList>
    </citation>
    <scope>NUCLEOTIDE SEQUENCE [LARGE SCALE GENOMIC DNA]</scope>
    <source>
        <strain>P125109</strain>
    </source>
</reference>
<keyword id="KW-0186">Copper</keyword>
<keyword id="KW-0963">Cytoplasm</keyword>
<keyword id="KW-0479">Metal-binding</keyword>
<accession>B5QZZ9</accession>
<gene>
    <name evidence="1" type="primary">cutA</name>
    <name type="ordered locus">SEN4094</name>
</gene>
<name>CUTA_SALEP</name>
<feature type="chain" id="PRO_1000137849" description="Divalent-cation tolerance protein CutA">
    <location>
        <begin position="1"/>
        <end position="115"/>
    </location>
</feature>
<feature type="binding site" evidence="1">
    <location>
        <position position="19"/>
    </location>
    <ligand>
        <name>Cu cation</name>
        <dbReference type="ChEBI" id="CHEBI:23378"/>
    </ligand>
</feature>
<feature type="binding site" evidence="1">
    <location>
        <position position="86"/>
    </location>
    <ligand>
        <name>Cu cation</name>
        <dbReference type="ChEBI" id="CHEBI:23378"/>
    </ligand>
</feature>
<feature type="binding site" evidence="1">
    <location>
        <position position="87"/>
    </location>
    <ligand>
        <name>Cu cation</name>
        <dbReference type="ChEBI" id="CHEBI:23378"/>
    </ligand>
</feature>
<comment type="function">
    <text evidence="1">Involved in resistance toward heavy metals.</text>
</comment>
<comment type="cofactor">
    <cofactor evidence="1">
        <name>Cu cation</name>
        <dbReference type="ChEBI" id="CHEBI:23378"/>
    </cofactor>
    <text evidence="1">Binds 1 copper ion per subunit.</text>
</comment>
<comment type="subunit">
    <text evidence="1">Homotrimer.</text>
</comment>
<comment type="subcellular location">
    <subcellularLocation>
        <location evidence="1">Cytoplasm</location>
    </subcellularLocation>
</comment>
<comment type="similarity">
    <text evidence="1">Belongs to the CutA family.</text>
</comment>
<protein>
    <recommendedName>
        <fullName evidence="1">Divalent-cation tolerance protein CutA</fullName>
    </recommendedName>
</protein>